<accession>Q88CW4</accession>
<sequence length="580" mass="61351">MDASTINSLFLIGALLVGASILVSSLSSRLGIPILVIILAVGMLAGVDGGGIIFNNYPTAYLVGNLALAVILLDGGLRTRVASFRVALWPALSLATVGVMITTALTGLIAAWLFNLSLIQGLLIGAIVGSTDAAAVFSLLGGKGLNERVSATLEIESGSNDPMAVFLTVTLIDMIASGETGLHWSLLGHLLREFGIGTLLGLGGGWLMLQLVNRINLAGGLYPILVVAGGLVMFSLTNALHGSGFLAVYLCGLVLGNKPIRSRHGILHMLDGMAWLAQIGMFLVLGLLVTPHDLLPIALPALGLALWMILVARPLSVVAALLPFKAFHGREKGFISWVGLRGAVPIILAVFPLMAGLPDAQLFFNLAFFIVLVSLLVQGTSLPWVAKLLKVTVPPDPAPISRSALEVHITSEWEMFVYRLGAEKWCIGAALRELKMPEGTRIAALFRGEQLLHPSGSTVLEVGDMLCVIGHEHNLPALGKLFSQAPQRGLDLRFFGDFVLEGDAELGAVAALYGLKLDGLDAKMPLAQFIRQKVGGAPVVGDQVEWHGTIWTVATMDGNKIQKVGVRFPEGTRPGPGLFL</sequence>
<gene>
    <name evidence="1" type="primary">nhaP2</name>
    <name type="synonym">cvrA</name>
    <name type="ordered locus">PP_5066</name>
</gene>
<proteinExistence type="inferred from homology"/>
<keyword id="KW-0050">Antiport</keyword>
<keyword id="KW-0997">Cell inner membrane</keyword>
<keyword id="KW-1003">Cell membrane</keyword>
<keyword id="KW-0406">Ion transport</keyword>
<keyword id="KW-0472">Membrane</keyword>
<keyword id="KW-0630">Potassium</keyword>
<keyword id="KW-0633">Potassium transport</keyword>
<keyword id="KW-1185">Reference proteome</keyword>
<keyword id="KW-0812">Transmembrane</keyword>
<keyword id="KW-1133">Transmembrane helix</keyword>
<keyword id="KW-0813">Transport</keyword>
<organism>
    <name type="scientific">Pseudomonas putida (strain ATCC 47054 / DSM 6125 / CFBP 8728 / NCIMB 11950 / KT2440)</name>
    <dbReference type="NCBI Taxonomy" id="160488"/>
    <lineage>
        <taxon>Bacteria</taxon>
        <taxon>Pseudomonadati</taxon>
        <taxon>Pseudomonadota</taxon>
        <taxon>Gammaproteobacteria</taxon>
        <taxon>Pseudomonadales</taxon>
        <taxon>Pseudomonadaceae</taxon>
        <taxon>Pseudomonas</taxon>
    </lineage>
</organism>
<feature type="chain" id="PRO_0000052392" description="K(+)/H(+) antiporter NhaP2">
    <location>
        <begin position="1"/>
        <end position="580"/>
    </location>
</feature>
<feature type="transmembrane region" description="Helical" evidence="1">
    <location>
        <begin position="6"/>
        <end position="26"/>
    </location>
</feature>
<feature type="transmembrane region" description="Helical" evidence="1">
    <location>
        <begin position="34"/>
        <end position="54"/>
    </location>
</feature>
<feature type="transmembrane region" description="Helical" evidence="1">
    <location>
        <begin position="57"/>
        <end position="77"/>
    </location>
</feature>
<feature type="transmembrane region" description="Helical" evidence="1">
    <location>
        <begin position="86"/>
        <end position="106"/>
    </location>
</feature>
<feature type="transmembrane region" description="Helical" evidence="1">
    <location>
        <begin position="108"/>
        <end position="128"/>
    </location>
</feature>
<feature type="transmembrane region" description="Helical" evidence="1">
    <location>
        <begin position="162"/>
        <end position="182"/>
    </location>
</feature>
<feature type="transmembrane region" description="Helical" evidence="1">
    <location>
        <begin position="193"/>
        <end position="213"/>
    </location>
</feature>
<feature type="transmembrane region" description="Helical" evidence="1">
    <location>
        <begin position="217"/>
        <end position="237"/>
    </location>
</feature>
<feature type="transmembrane region" description="Helical" evidence="1">
    <location>
        <begin position="240"/>
        <end position="260"/>
    </location>
</feature>
<feature type="transmembrane region" description="Helical" evidence="1">
    <location>
        <begin position="269"/>
        <end position="289"/>
    </location>
</feature>
<feature type="transmembrane region" description="Helical" evidence="1">
    <location>
        <begin position="292"/>
        <end position="312"/>
    </location>
</feature>
<feature type="transmembrane region" description="Helical" evidence="1">
    <location>
        <begin position="334"/>
        <end position="354"/>
    </location>
</feature>
<feature type="transmembrane region" description="Helical" evidence="1">
    <location>
        <begin position="362"/>
        <end position="382"/>
    </location>
</feature>
<feature type="domain" description="RCK C-terminal" evidence="1">
    <location>
        <begin position="402"/>
        <end position="484"/>
    </location>
</feature>
<evidence type="ECO:0000255" key="1">
    <source>
        <dbReference type="HAMAP-Rule" id="MF_01075"/>
    </source>
</evidence>
<evidence type="ECO:0000305" key="2"/>
<protein>
    <recommendedName>
        <fullName evidence="1">K(+)/H(+) antiporter NhaP2</fullName>
    </recommendedName>
    <alternativeName>
        <fullName evidence="1">Potassium/proton antiporter NhaP2</fullName>
    </alternativeName>
</protein>
<comment type="function">
    <text evidence="1">K(+)/H(+) antiporter that extrudes potassium in exchange for external protons and maintains the internal concentration of potassium under toxic levels.</text>
</comment>
<comment type="catalytic activity">
    <reaction evidence="1">
        <text>K(+)(in) + H(+)(out) = K(+)(out) + H(+)(in)</text>
        <dbReference type="Rhea" id="RHEA:29467"/>
        <dbReference type="ChEBI" id="CHEBI:15378"/>
        <dbReference type="ChEBI" id="CHEBI:29103"/>
    </reaction>
    <physiologicalReaction direction="left-to-right" evidence="1">
        <dbReference type="Rhea" id="RHEA:29468"/>
    </physiologicalReaction>
</comment>
<comment type="subcellular location">
    <subcellularLocation>
        <location evidence="1">Cell inner membrane</location>
        <topology evidence="1">Multi-pass membrane protein</topology>
    </subcellularLocation>
</comment>
<comment type="similarity">
    <text evidence="1">Belongs to the monovalent cation:proton antiporter 1 (CPA1) transporter (TC 2.A.36) family. NhaP2 subfamily.</text>
</comment>
<comment type="sequence caution" evidence="2">
    <conflict type="erroneous initiation">
        <sequence resource="EMBL-CDS" id="AAN70631"/>
    </conflict>
</comment>
<reference key="1">
    <citation type="journal article" date="2002" name="Environ. Microbiol.">
        <title>Complete genome sequence and comparative analysis of the metabolically versatile Pseudomonas putida KT2440.</title>
        <authorList>
            <person name="Nelson K.E."/>
            <person name="Weinel C."/>
            <person name="Paulsen I.T."/>
            <person name="Dodson R.J."/>
            <person name="Hilbert H."/>
            <person name="Martins dos Santos V.A.P."/>
            <person name="Fouts D.E."/>
            <person name="Gill S.R."/>
            <person name="Pop M."/>
            <person name="Holmes M."/>
            <person name="Brinkac L.M."/>
            <person name="Beanan M.J."/>
            <person name="DeBoy R.T."/>
            <person name="Daugherty S.C."/>
            <person name="Kolonay J.F."/>
            <person name="Madupu R."/>
            <person name="Nelson W.C."/>
            <person name="White O."/>
            <person name="Peterson J.D."/>
            <person name="Khouri H.M."/>
            <person name="Hance I."/>
            <person name="Chris Lee P."/>
            <person name="Holtzapple E.K."/>
            <person name="Scanlan D."/>
            <person name="Tran K."/>
            <person name="Moazzez A."/>
            <person name="Utterback T.R."/>
            <person name="Rizzo M."/>
            <person name="Lee K."/>
            <person name="Kosack D."/>
            <person name="Moestl D."/>
            <person name="Wedler H."/>
            <person name="Lauber J."/>
            <person name="Stjepandic D."/>
            <person name="Hoheisel J."/>
            <person name="Straetz M."/>
            <person name="Heim S."/>
            <person name="Kiewitz C."/>
            <person name="Eisen J.A."/>
            <person name="Timmis K.N."/>
            <person name="Duesterhoeft A."/>
            <person name="Tuemmler B."/>
            <person name="Fraser C.M."/>
        </authorList>
    </citation>
    <scope>NUCLEOTIDE SEQUENCE [LARGE SCALE GENOMIC DNA]</scope>
    <source>
        <strain>ATCC 47054 / DSM 6125 / CFBP 8728 / NCIMB 11950 / KT2440</strain>
    </source>
</reference>
<name>NHAP2_PSEPK</name>
<dbReference type="EMBL" id="AE015451">
    <property type="protein sequence ID" value="AAN70631.1"/>
    <property type="status" value="ALT_INIT"/>
    <property type="molecule type" value="Genomic_DNA"/>
</dbReference>
<dbReference type="RefSeq" id="NP_747167.3">
    <property type="nucleotide sequence ID" value="NC_002947.4"/>
</dbReference>
<dbReference type="RefSeq" id="WP_010955613.1">
    <property type="nucleotide sequence ID" value="NZ_CP169744.1"/>
</dbReference>
<dbReference type="SMR" id="Q88CW4"/>
<dbReference type="STRING" id="160488.PP_5066"/>
<dbReference type="PaxDb" id="160488-PP_5066"/>
<dbReference type="KEGG" id="ppu:PP_5066"/>
<dbReference type="PATRIC" id="fig|160488.4.peg.5408"/>
<dbReference type="eggNOG" id="COG3263">
    <property type="taxonomic scope" value="Bacteria"/>
</dbReference>
<dbReference type="HOGENOM" id="CLU_005912_9_2_6"/>
<dbReference type="OrthoDB" id="9810759at2"/>
<dbReference type="PhylomeDB" id="Q88CW4"/>
<dbReference type="Proteomes" id="UP000000556">
    <property type="component" value="Chromosome"/>
</dbReference>
<dbReference type="GO" id="GO:0005886">
    <property type="term" value="C:plasma membrane"/>
    <property type="evidence" value="ECO:0007669"/>
    <property type="project" value="UniProtKB-SubCell"/>
</dbReference>
<dbReference type="GO" id="GO:0050660">
    <property type="term" value="F:flavin adenine dinucleotide binding"/>
    <property type="evidence" value="ECO:0007669"/>
    <property type="project" value="InterPro"/>
</dbReference>
<dbReference type="GO" id="GO:0015386">
    <property type="term" value="F:potassium:proton antiporter activity"/>
    <property type="evidence" value="ECO:0007669"/>
    <property type="project" value="UniProtKB-UniRule"/>
</dbReference>
<dbReference type="GO" id="GO:0006884">
    <property type="term" value="P:cell volume homeostasis"/>
    <property type="evidence" value="ECO:0007669"/>
    <property type="project" value="InterPro"/>
</dbReference>
<dbReference type="Gene3D" id="1.20.1530.20">
    <property type="match status" value="1"/>
</dbReference>
<dbReference type="Gene3D" id="3.30.465.10">
    <property type="match status" value="1"/>
</dbReference>
<dbReference type="Gene3D" id="3.30.70.1450">
    <property type="entry name" value="Regulator of K+ conductance, C-terminal domain"/>
    <property type="match status" value="1"/>
</dbReference>
<dbReference type="HAMAP" id="MF_01075">
    <property type="entry name" value="NhaP2"/>
    <property type="match status" value="1"/>
</dbReference>
<dbReference type="InterPro" id="IPR006153">
    <property type="entry name" value="Cation/H_exchanger_TM"/>
</dbReference>
<dbReference type="InterPro" id="IPR036318">
    <property type="entry name" value="FAD-bd_PCMH-like_sf"/>
</dbReference>
<dbReference type="InterPro" id="IPR016169">
    <property type="entry name" value="FAD-bd_PCMH_sub2"/>
</dbReference>
<dbReference type="InterPro" id="IPR038770">
    <property type="entry name" value="Na+/solute_symporter_sf"/>
</dbReference>
<dbReference type="InterPro" id="IPR023729">
    <property type="entry name" value="NhaP2"/>
</dbReference>
<dbReference type="InterPro" id="IPR006037">
    <property type="entry name" value="RCK_C"/>
</dbReference>
<dbReference type="InterPro" id="IPR036721">
    <property type="entry name" value="RCK_C_sf"/>
</dbReference>
<dbReference type="InterPro" id="IPR005170">
    <property type="entry name" value="Transptr-assoc_dom"/>
</dbReference>
<dbReference type="NCBIfam" id="NF003714">
    <property type="entry name" value="PRK05326.1-1"/>
    <property type="match status" value="1"/>
</dbReference>
<dbReference type="NCBIfam" id="NF003715">
    <property type="entry name" value="PRK05326.1-2"/>
    <property type="match status" value="1"/>
</dbReference>
<dbReference type="NCBIfam" id="NF003716">
    <property type="entry name" value="PRK05326.1-3"/>
    <property type="match status" value="1"/>
</dbReference>
<dbReference type="PANTHER" id="PTHR32507:SF7">
    <property type="entry name" value="K(+)_H(+) ANTIPORTER NHAP2"/>
    <property type="match status" value="1"/>
</dbReference>
<dbReference type="PANTHER" id="PTHR32507">
    <property type="entry name" value="NA(+)/H(+) ANTIPORTER 1"/>
    <property type="match status" value="1"/>
</dbReference>
<dbReference type="Pfam" id="PF03471">
    <property type="entry name" value="CorC_HlyC"/>
    <property type="match status" value="1"/>
</dbReference>
<dbReference type="Pfam" id="PF00999">
    <property type="entry name" value="Na_H_Exchanger"/>
    <property type="match status" value="1"/>
</dbReference>
<dbReference type="Pfam" id="PF02080">
    <property type="entry name" value="TrkA_C"/>
    <property type="match status" value="1"/>
</dbReference>
<dbReference type="SMART" id="SM01091">
    <property type="entry name" value="CorC_HlyC"/>
    <property type="match status" value="1"/>
</dbReference>
<dbReference type="SUPFAM" id="SSF56176">
    <property type="entry name" value="FAD-binding/transporter-associated domain-like"/>
    <property type="match status" value="1"/>
</dbReference>
<dbReference type="SUPFAM" id="SSF116726">
    <property type="entry name" value="TrkA C-terminal domain-like"/>
    <property type="match status" value="1"/>
</dbReference>
<dbReference type="PROSITE" id="PS51202">
    <property type="entry name" value="RCK_C"/>
    <property type="match status" value="1"/>
</dbReference>